<name>PKS38_DICDI</name>
<protein>
    <recommendedName>
        <fullName>Probable polyketide synthase 38</fullName>
        <shortName>dipks38</shortName>
        <ecNumber>2.3.1.-</ecNumber>
    </recommendedName>
</protein>
<dbReference type="EC" id="2.3.1.-"/>
<dbReference type="EMBL" id="AAFI02000172">
    <property type="protein sequence ID" value="EAL61984.1"/>
    <property type="molecule type" value="Genomic_DNA"/>
</dbReference>
<dbReference type="RefSeq" id="XP_635490.1">
    <property type="nucleotide sequence ID" value="XM_630398.1"/>
</dbReference>
<dbReference type="SMR" id="Q54FD2"/>
<dbReference type="FunCoup" id="Q54FD2">
    <property type="interactions" value="6"/>
</dbReference>
<dbReference type="STRING" id="44689.Q54FD2"/>
<dbReference type="PaxDb" id="44689-DDB0235304"/>
<dbReference type="EnsemblProtists" id="EAL61984">
    <property type="protein sequence ID" value="EAL61984"/>
    <property type="gene ID" value="DDB_G0290937"/>
</dbReference>
<dbReference type="GeneID" id="8627906"/>
<dbReference type="KEGG" id="ddi:DDB_G0290937"/>
<dbReference type="dictyBase" id="DDB_G0290937">
    <property type="gene designation" value="pks38"/>
</dbReference>
<dbReference type="VEuPathDB" id="AmoebaDB:DDB_G0290937"/>
<dbReference type="eggNOG" id="KOG1178">
    <property type="taxonomic scope" value="Eukaryota"/>
</dbReference>
<dbReference type="eggNOG" id="KOG1202">
    <property type="taxonomic scope" value="Eukaryota"/>
</dbReference>
<dbReference type="HOGENOM" id="CLU_000022_31_5_1"/>
<dbReference type="InParanoid" id="Q54FD2"/>
<dbReference type="OMA" id="IATNFMA"/>
<dbReference type="PhylomeDB" id="Q54FD2"/>
<dbReference type="PRO" id="PR:Q54FD2"/>
<dbReference type="Proteomes" id="UP000002195">
    <property type="component" value="Chromosome 5"/>
</dbReference>
<dbReference type="GO" id="GO:0004315">
    <property type="term" value="F:3-oxoacyl-[acyl-carrier-protein] synthase activity"/>
    <property type="evidence" value="ECO:0007669"/>
    <property type="project" value="InterPro"/>
</dbReference>
<dbReference type="GO" id="GO:0016491">
    <property type="term" value="F:oxidoreductase activity"/>
    <property type="evidence" value="ECO:0007669"/>
    <property type="project" value="InterPro"/>
</dbReference>
<dbReference type="GO" id="GO:0006633">
    <property type="term" value="P:fatty acid biosynthetic process"/>
    <property type="evidence" value="ECO:0000318"/>
    <property type="project" value="GO_Central"/>
</dbReference>
<dbReference type="CDD" id="cd02440">
    <property type="entry name" value="AdoMet_MTases"/>
    <property type="match status" value="1"/>
</dbReference>
<dbReference type="CDD" id="cd05195">
    <property type="entry name" value="enoyl_red"/>
    <property type="match status" value="1"/>
</dbReference>
<dbReference type="CDD" id="cd08954">
    <property type="entry name" value="KR_1_FAS_SDR_x"/>
    <property type="match status" value="1"/>
</dbReference>
<dbReference type="CDD" id="cd00833">
    <property type="entry name" value="PKS"/>
    <property type="match status" value="1"/>
</dbReference>
<dbReference type="CDD" id="cd05235">
    <property type="entry name" value="SDR_e1"/>
    <property type="match status" value="1"/>
</dbReference>
<dbReference type="FunFam" id="3.10.129.110:FF:000009">
    <property type="entry name" value="Probable polyketide synthase 2"/>
    <property type="match status" value="1"/>
</dbReference>
<dbReference type="FunFam" id="3.40.366.10:FF:000002">
    <property type="entry name" value="Probable polyketide synthase 2"/>
    <property type="match status" value="1"/>
</dbReference>
<dbReference type="FunFam" id="3.40.47.10:FF:000091">
    <property type="entry name" value="Probable polyketide synthase 32"/>
    <property type="match status" value="1"/>
</dbReference>
<dbReference type="FunFam" id="3.40.50.720:FF:000794">
    <property type="entry name" value="Probable polyketide synthase 33"/>
    <property type="match status" value="1"/>
</dbReference>
<dbReference type="Gene3D" id="3.40.47.10">
    <property type="match status" value="1"/>
</dbReference>
<dbReference type="Gene3D" id="1.10.1200.10">
    <property type="entry name" value="ACP-like"/>
    <property type="match status" value="1"/>
</dbReference>
<dbReference type="Gene3D" id="3.40.366.10">
    <property type="entry name" value="Malonyl-Coenzyme A Acyl Carrier Protein, domain 2"/>
    <property type="match status" value="1"/>
</dbReference>
<dbReference type="Gene3D" id="3.90.180.10">
    <property type="entry name" value="Medium-chain alcohol dehydrogenases, catalytic domain"/>
    <property type="match status" value="1"/>
</dbReference>
<dbReference type="Gene3D" id="3.40.50.720">
    <property type="entry name" value="NAD(P)-binding Rossmann-like Domain"/>
    <property type="match status" value="3"/>
</dbReference>
<dbReference type="Gene3D" id="3.10.129.110">
    <property type="entry name" value="Polyketide synthase dehydratase"/>
    <property type="match status" value="1"/>
</dbReference>
<dbReference type="Gene3D" id="3.40.50.150">
    <property type="entry name" value="Vaccinia Virus protein VP39"/>
    <property type="match status" value="1"/>
</dbReference>
<dbReference type="InterPro" id="IPR001227">
    <property type="entry name" value="Ac_transferase_dom_sf"/>
</dbReference>
<dbReference type="InterPro" id="IPR036736">
    <property type="entry name" value="ACP-like_sf"/>
</dbReference>
<dbReference type="InterPro" id="IPR014043">
    <property type="entry name" value="Acyl_transferase_dom"/>
</dbReference>
<dbReference type="InterPro" id="IPR016035">
    <property type="entry name" value="Acyl_Trfase/lysoPLipase"/>
</dbReference>
<dbReference type="InterPro" id="IPR013154">
    <property type="entry name" value="ADH-like_N"/>
</dbReference>
<dbReference type="InterPro" id="IPR013120">
    <property type="entry name" value="Far_NAD-bd"/>
</dbReference>
<dbReference type="InterPro" id="IPR011032">
    <property type="entry name" value="GroES-like_sf"/>
</dbReference>
<dbReference type="InterPro" id="IPR018201">
    <property type="entry name" value="Ketoacyl_synth_AS"/>
</dbReference>
<dbReference type="InterPro" id="IPR014031">
    <property type="entry name" value="Ketoacyl_synth_C"/>
</dbReference>
<dbReference type="InterPro" id="IPR014030">
    <property type="entry name" value="Ketoacyl_synth_N"/>
</dbReference>
<dbReference type="InterPro" id="IPR016036">
    <property type="entry name" value="Malonyl_transacylase_ACP-bd"/>
</dbReference>
<dbReference type="InterPro" id="IPR013217">
    <property type="entry name" value="Methyltransf_12"/>
</dbReference>
<dbReference type="InterPro" id="IPR036291">
    <property type="entry name" value="NAD(P)-bd_dom_sf"/>
</dbReference>
<dbReference type="InterPro" id="IPR020841">
    <property type="entry name" value="PKS_Beta-ketoAc_synthase_dom"/>
</dbReference>
<dbReference type="InterPro" id="IPR042104">
    <property type="entry name" value="PKS_dehydratase_sf"/>
</dbReference>
<dbReference type="InterPro" id="IPR020843">
    <property type="entry name" value="PKS_ER"/>
</dbReference>
<dbReference type="InterPro" id="IPR013968">
    <property type="entry name" value="PKS_KR"/>
</dbReference>
<dbReference type="InterPro" id="IPR049900">
    <property type="entry name" value="PKS_mFAS_DH"/>
</dbReference>
<dbReference type="InterPro" id="IPR050444">
    <property type="entry name" value="Polyketide_Synthase"/>
</dbReference>
<dbReference type="InterPro" id="IPR009081">
    <property type="entry name" value="PP-bd_ACP"/>
</dbReference>
<dbReference type="InterPro" id="IPR029063">
    <property type="entry name" value="SAM-dependent_MTases_sf"/>
</dbReference>
<dbReference type="InterPro" id="IPR010080">
    <property type="entry name" value="Thioester_reductase-like_dom"/>
</dbReference>
<dbReference type="InterPro" id="IPR016039">
    <property type="entry name" value="Thiolase-like"/>
</dbReference>
<dbReference type="PANTHER" id="PTHR45681:SF5">
    <property type="entry name" value="POLYKETIDE SYNTHASE 27-RELATED"/>
    <property type="match status" value="1"/>
</dbReference>
<dbReference type="PANTHER" id="PTHR45681">
    <property type="entry name" value="POLYKETIDE SYNTHASE 44-RELATED"/>
    <property type="match status" value="1"/>
</dbReference>
<dbReference type="Pfam" id="PF23297">
    <property type="entry name" value="ACP_SdgA_C"/>
    <property type="match status" value="1"/>
</dbReference>
<dbReference type="Pfam" id="PF00698">
    <property type="entry name" value="Acyl_transf_1"/>
    <property type="match status" value="1"/>
</dbReference>
<dbReference type="Pfam" id="PF08240">
    <property type="entry name" value="ADH_N"/>
    <property type="match status" value="1"/>
</dbReference>
<dbReference type="Pfam" id="PF13602">
    <property type="entry name" value="ADH_zinc_N_2"/>
    <property type="match status" value="1"/>
</dbReference>
<dbReference type="Pfam" id="PF00109">
    <property type="entry name" value="ketoacyl-synt"/>
    <property type="match status" value="1"/>
</dbReference>
<dbReference type="Pfam" id="PF02801">
    <property type="entry name" value="Ketoacyl-synt_C"/>
    <property type="match status" value="1"/>
</dbReference>
<dbReference type="Pfam" id="PF08659">
    <property type="entry name" value="KR"/>
    <property type="match status" value="1"/>
</dbReference>
<dbReference type="Pfam" id="PF08242">
    <property type="entry name" value="Methyltransf_12"/>
    <property type="match status" value="1"/>
</dbReference>
<dbReference type="Pfam" id="PF07993">
    <property type="entry name" value="NAD_binding_4"/>
    <property type="match status" value="1"/>
</dbReference>
<dbReference type="SMART" id="SM00827">
    <property type="entry name" value="PKS_AT"/>
    <property type="match status" value="1"/>
</dbReference>
<dbReference type="SMART" id="SM00829">
    <property type="entry name" value="PKS_ER"/>
    <property type="match status" value="1"/>
</dbReference>
<dbReference type="SMART" id="SM00822">
    <property type="entry name" value="PKS_KR"/>
    <property type="match status" value="1"/>
</dbReference>
<dbReference type="SMART" id="SM00825">
    <property type="entry name" value="PKS_KS"/>
    <property type="match status" value="1"/>
</dbReference>
<dbReference type="SUPFAM" id="SSF47336">
    <property type="entry name" value="ACP-like"/>
    <property type="match status" value="1"/>
</dbReference>
<dbReference type="SUPFAM" id="SSF52151">
    <property type="entry name" value="FabD/lysophospholipase-like"/>
    <property type="match status" value="1"/>
</dbReference>
<dbReference type="SUPFAM" id="SSF50129">
    <property type="entry name" value="GroES-like"/>
    <property type="match status" value="1"/>
</dbReference>
<dbReference type="SUPFAM" id="SSF51735">
    <property type="entry name" value="NAD(P)-binding Rossmann-fold domains"/>
    <property type="match status" value="3"/>
</dbReference>
<dbReference type="SUPFAM" id="SSF55048">
    <property type="entry name" value="Probable ACP-binding domain of malonyl-CoA ACP transacylase"/>
    <property type="match status" value="1"/>
</dbReference>
<dbReference type="SUPFAM" id="SSF53335">
    <property type="entry name" value="S-adenosyl-L-methionine-dependent methyltransferases"/>
    <property type="match status" value="1"/>
</dbReference>
<dbReference type="SUPFAM" id="SSF53901">
    <property type="entry name" value="Thiolase-like"/>
    <property type="match status" value="1"/>
</dbReference>
<dbReference type="PROSITE" id="PS50075">
    <property type="entry name" value="CARRIER"/>
    <property type="match status" value="1"/>
</dbReference>
<dbReference type="PROSITE" id="PS00606">
    <property type="entry name" value="KS3_1"/>
    <property type="match status" value="1"/>
</dbReference>
<dbReference type="PROSITE" id="PS52004">
    <property type="entry name" value="KS3_2"/>
    <property type="match status" value="1"/>
</dbReference>
<dbReference type="PROSITE" id="PS52019">
    <property type="entry name" value="PKS_MFAS_DH"/>
    <property type="match status" value="1"/>
</dbReference>
<keyword id="KW-0175">Coiled coil</keyword>
<keyword id="KW-0596">Phosphopantetheine</keyword>
<keyword id="KW-0597">Phosphoprotein</keyword>
<keyword id="KW-1185">Reference proteome</keyword>
<keyword id="KW-0808">Transferase</keyword>
<sequence length="3133" mass="357196">MTENIDKNDDDVAVIGIGLRFPSGNLKESISKPNQLFNELLNGLDGIVTTSERWSDNYYLNGEVVSKFAGLLPLDEWKQFDPIFFAINPSYDNVSSIDPQQRLLLKCVWEALEDSGIDPISLRGTNTSTFIGSSTIDYNDLQKSPFETQNNIFGSTTHSIANRIGFSFDFRGENLTIDTACSSSSNAINCGYNSIKSNKSNVSIVGGVNFILNPYISKSFTQLDMLSPTGKCHTFSSDADGFVRSEGVGIVVLKKLKDAIKDSNNIYCVIKGSSSNIDGNFDKLNFYSPSKLSQFENIKLAIKSTNGQINESDIDYCETHGTGTPTGDPIELEGISRAFNNKASTTNNNKQVLVGSFKSNIGHTEACSGVASLIKCCLMFKNKLFLQNINFKEPNPLINFKEWGLKVVTEPIKFNENKPTVMLINNFGITGSNVCLILSEFSGYQFGYSKSNDYQKMEIDNKFNEKKKYLIPLSSNSSTSLDNYKLSIIKHLNSRSSSSSTTTSFEEFVYNQIKFKSTSLIQKSVIIASDWNEFQDENNQIKLENSDNLISNITVEKKKSPIIVMVLCGQGSQYNKMALSLYDNEPIFRESVNRFDKELFKYYGYSVLDKLRSIDDKDLISIHQSILAQPATVIIQVSLYELYKHRGVSADIIIGHSLGEISSAYCSGMIDFQTLCYLTYHRSVAQNRTSGTGKMLSVNISSDEFINSYQSTTKYESLEIACYNSPTSIVIAGKEDLLNEITKDFKTNDIFCAMLGSLSSFHTSSQQMIKDEVCSLNISSKQSSIAIFSTVTTNLFNDETSPFDADYVFDNIRQPVRFTQTITNLYKYFESNDMGNEITFIEVSPHPTLQFYLNQMKSTQSSYFNSGKNITIYSPLNKKKNDYNEFLKTISLLYVNNNLNINFKSQLIDNNNNYTNQFNNLPLYQWDDKEYFKISWFQEKIKNEGPSIHSLGNNTDSPYPSYQTFIDIKKSPFQWLKGHQVSDKFYYPGMGYVHNLLSIYPNQDITISSLEFKSPLILTEGNRQCLQTTIAPLSKNEFNIKSHYKDQKTNQWILTSLGNFSLSKHNIENNEPINIRALKDKCNFTCISKQDLYETVRIKTNLTYKGLFQGVKQCYIGNNCSLAIVSLNEIYNQKEYNHLINNSNMNTLFNTAILDTCLHGVLGVVTQPVVLDRIEGFKFYSSNTPSFNNNSTNSNNDTINELYVYSENKARINSKTYSGSIKIILPNGTLLIDIGNVVCTIVASNPDSTIICEPPSNKIYTPYLQSKDSVIKNPEQFKHLYRVDEFSFKNEENQFISIGLLLSLFYKHINNRCPSINLESLETLEYDQFKQLYYNSSRNENLFKFIFENLKNYQNIMYSNSFNKTILFNNNNNNNNNNNNNNNNNNNNNNNNNNNNNNNNNNDNDNDNNCYNYENFYIRTTKIMAKQLFPLKDDDSITDTPQSLFESGYLDYHYKNSKIVQPLNNLLGEIIVETLKPILNEPIVFRILEAGGGTGSLSLLILEKICKLLNENNSTSIIDIEFTWSDISASFFAEIKEKFSSFTNHNSLNIIYRVLDLEKPLLDQDLKASYYDFVVMSNVMHVVKKLKPTLNEIHNILAPNGQLLFVEPPYKSFFIDSIFGCFSQWWPSSDSDIELRPDRCCMEQEKWISLLNQCTYRDTVLYGNDKLLFLIQTRKPTINEIISEQSISLDQLNSFNNIILFSSNNNNDNNNNSNNYYNNRNSYSSSSIQNLIRLNQELKHKIININNYNEFQSWITNNQNKDNCGNKTLIIFLKSIESIMNTSNFKEITFEYIQINQLILKLELSNSFKHLLLSLNSTTDNYLSSSIVGAARYFVEFPQLDLYILNYDNISIENNQQLLSLINYLIDSNNNIQKEFTIINNKVYYERYCRRSNNIKSKLQSKSFETNKDNLFIQLNSNLEYQLYSKKDELNSNEVEIEIKATSINYKDYLMYIGMIGTDIDIKYGKEYEIENGIGIDNPKIGNDFSGIITRLGCNVKDFKVGDQVCGVGSKTNSSHIIVDYNYIYYKPLNYSYSVSASIPSVYITSLHSIYNIGNLKSNESILIHSAAGGIGISSLDLLKSKQHQGYIFLTVGSKDKEEYLIKKYGSLITAIYSSRNKNYVKDIKNKLIELGEVEQHQQQGVDLILNTLSSEFMDSNFQCLNLSGRIVDLSITHLTPNDYMTNNHYKFNVGYFNVEVIDFPGKLIKSYIKKIIKMINSNKLEPSVPIIEYSNNQFKDAIEYINQRKHIGKIIVNHNQDEFNRIYNIYQNNNNQIMKHSYDISKLNIGKNILLTGQTGIVLEILKYLVKYSNHSIENIIILSKSKLKWELELLINQTKFKKDNIIKFHFNQIDIEDSTKVNQVLNQLELNENITNIDSIIHFAFMNDICDVQKVDMNRLNITHGAKTIGAINLHNQSINRSWNIKQFIMASSVVSIFGSDKQCCYVSACNVIDSLSKYRHSIGLPSLAINLGAISSTGFVSRNNAIETMLKSTLSNLFSPQLVISSLDLFIQNQHQYPNYCLSDFNFEVLPSTLTNQHHSKFDFEINIVKKSNQIKSFSGDDNNNEIIRSTILNKISEILSIDESKINEDLQLSQYGMDSLVIVQLKNFVDNQLGHNIITIQQLQNNKINQSIEIIKSAHNKNKNNNNNNNNNSNHHDNIKKEQQSLDEFIKNETKLNESIISRPYSIKNILNNNNNNNNNNNNNNNNNNNNNNNNNNNNCQSIFLTGSTGFLGAYLLIELIKVNNISKIYCLIRNNSKLTNPIDVIINNLKKHQLIDMNKESPKRKTKIINHTGNISNDKLNSSNSNSDNSNNNNNQINEDQLIKIIPIIGDISKDKFGLTEQDYLKLSNECDIIINSAADINLKSNYEESKTVNVNSVNQIIKLSVSNNSSQKLIVHFSSLAVFINHPFKDEEDFEETNSVPSFNSTPIGYIQSKVISEKLITNAAESRGIPSIIIRPPDIFSNPITGIGHSNDFISLLIKASKEIGYYPNIHKSIFSTPVTTIAKTTIDLIFNENSWNQNKSKPISIYNFNGNSMEMKSFYRVLENNFKCKEIDFDEWIELVSKSNGKSSKRYSTFHIHKNQNLLLTTFTINSLLKMSNSTKELLTSIGSYNHQDWEINESMILNDIINNH</sequence>
<gene>
    <name type="primary">pks38</name>
    <name type="ORF">DDB_G0290937</name>
</gene>
<proteinExistence type="inferred from homology"/>
<comment type="function">
    <text evidence="1">Probable polyketide synthase.</text>
</comment>
<comment type="cofactor">
    <cofactor evidence="1">
        <name>pantetheine 4'-phosphate</name>
        <dbReference type="ChEBI" id="CHEBI:47942"/>
    </cofactor>
    <text evidence="1">Binds 1 phosphopantetheine covalently.</text>
</comment>
<comment type="domain">
    <text evidence="1">Modular protein that is responsible for the completion of one condensation-processing cycle. The beta-ketoacyl synthase region is responsible for the actual condensation reaction while the acyl/malonyl transferase region is responsible for incorporating carboxylic acids units onto an acyl carrier protein (ACP) domain (By similarity).</text>
</comment>
<comment type="miscellaneous">
    <text>Encoded by one of the numerous copies of polyketide synthase genes and clustered as a pair pks38/pks39 in chromosome 5.</text>
</comment>
<feature type="chain" id="PRO_0000371395" description="Probable polyketide synthase 38">
    <location>
        <begin position="1"/>
        <end position="3133"/>
    </location>
</feature>
<feature type="domain" description="Ketosynthase family 3 (KS3)" evidence="4">
    <location>
        <begin position="9"/>
        <end position="440"/>
    </location>
</feature>
<feature type="domain" description="PKS/mFAS DH" evidence="5">
    <location>
        <begin position="945"/>
        <end position="1248"/>
    </location>
</feature>
<feature type="domain" description="Carrier" evidence="3">
    <location>
        <begin position="2562"/>
        <end position="2639"/>
    </location>
</feature>
<feature type="region of interest" description="Acyl/malonyl transferase">
    <location>
        <begin position="647"/>
        <end position="680"/>
    </location>
</feature>
<feature type="region of interest" description="N-terminal hotdog fold" evidence="5">
    <location>
        <begin position="945"/>
        <end position="1067"/>
    </location>
</feature>
<feature type="region of interest" description="C-terminal hotdog fold" evidence="5">
    <location>
        <begin position="1083"/>
        <end position="1248"/>
    </location>
</feature>
<feature type="region of interest" description="Disordered" evidence="7">
    <location>
        <begin position="1370"/>
        <end position="1408"/>
    </location>
</feature>
<feature type="region of interest" description="Disordered" evidence="7">
    <location>
        <begin position="2691"/>
        <end position="2715"/>
    </location>
</feature>
<feature type="region of interest" description="Disordered" evidence="7">
    <location>
        <begin position="2794"/>
        <end position="2817"/>
    </location>
</feature>
<feature type="coiled-coil region" evidence="2">
    <location>
        <begin position="2649"/>
        <end position="2711"/>
    </location>
</feature>
<feature type="compositionally biased region" description="Low complexity" evidence="7">
    <location>
        <begin position="2692"/>
        <end position="2715"/>
    </location>
</feature>
<feature type="compositionally biased region" description="Low complexity" evidence="7">
    <location>
        <begin position="2795"/>
        <end position="2817"/>
    </location>
</feature>
<feature type="active site" description="For beta-ketoacyl synthase activity" evidence="4">
    <location>
        <position position="181"/>
    </location>
</feature>
<feature type="active site" description="For beta-ketoacyl synthase activity" evidence="4">
    <location>
        <position position="320"/>
    </location>
</feature>
<feature type="active site" description="For beta-ketoacyl synthase activity" evidence="4">
    <location>
        <position position="363"/>
    </location>
</feature>
<feature type="active site" description="For acyl/malonyl transferase activity" evidence="6">
    <location>
        <position position="657"/>
    </location>
</feature>
<feature type="active site" description="Proton acceptor; for dehydratase activity" evidence="5">
    <location>
        <position position="979"/>
    </location>
</feature>
<feature type="active site" description="Proton donor; for dehydratase activity" evidence="5">
    <location>
        <position position="1155"/>
    </location>
</feature>
<feature type="modified residue" description="O-(pantetheine 4'-phosphoryl)serine" evidence="3">
    <location>
        <position position="2599"/>
    </location>
</feature>
<evidence type="ECO:0000250" key="1"/>
<evidence type="ECO:0000255" key="2"/>
<evidence type="ECO:0000255" key="3">
    <source>
        <dbReference type="PROSITE-ProRule" id="PRU00258"/>
    </source>
</evidence>
<evidence type="ECO:0000255" key="4">
    <source>
        <dbReference type="PROSITE-ProRule" id="PRU01348"/>
    </source>
</evidence>
<evidence type="ECO:0000255" key="5">
    <source>
        <dbReference type="PROSITE-ProRule" id="PRU01363"/>
    </source>
</evidence>
<evidence type="ECO:0000255" key="6">
    <source>
        <dbReference type="PROSITE-ProRule" id="PRU10022"/>
    </source>
</evidence>
<evidence type="ECO:0000256" key="7">
    <source>
        <dbReference type="SAM" id="MobiDB-lite"/>
    </source>
</evidence>
<reference key="1">
    <citation type="journal article" date="2005" name="Nature">
        <title>The genome of the social amoeba Dictyostelium discoideum.</title>
        <authorList>
            <person name="Eichinger L."/>
            <person name="Pachebat J.A."/>
            <person name="Gloeckner G."/>
            <person name="Rajandream M.A."/>
            <person name="Sucgang R."/>
            <person name="Berriman M."/>
            <person name="Song J."/>
            <person name="Olsen R."/>
            <person name="Szafranski K."/>
            <person name="Xu Q."/>
            <person name="Tunggal B."/>
            <person name="Kummerfeld S."/>
            <person name="Madera M."/>
            <person name="Konfortov B.A."/>
            <person name="Rivero F."/>
            <person name="Bankier A.T."/>
            <person name="Lehmann R."/>
            <person name="Hamlin N."/>
            <person name="Davies R."/>
            <person name="Gaudet P."/>
            <person name="Fey P."/>
            <person name="Pilcher K."/>
            <person name="Chen G."/>
            <person name="Saunders D."/>
            <person name="Sodergren E.J."/>
            <person name="Davis P."/>
            <person name="Kerhornou A."/>
            <person name="Nie X."/>
            <person name="Hall N."/>
            <person name="Anjard C."/>
            <person name="Hemphill L."/>
            <person name="Bason N."/>
            <person name="Farbrother P."/>
            <person name="Desany B."/>
            <person name="Just E."/>
            <person name="Morio T."/>
            <person name="Rost R."/>
            <person name="Churcher C.M."/>
            <person name="Cooper J."/>
            <person name="Haydock S."/>
            <person name="van Driessche N."/>
            <person name="Cronin A."/>
            <person name="Goodhead I."/>
            <person name="Muzny D.M."/>
            <person name="Mourier T."/>
            <person name="Pain A."/>
            <person name="Lu M."/>
            <person name="Harper D."/>
            <person name="Lindsay R."/>
            <person name="Hauser H."/>
            <person name="James K.D."/>
            <person name="Quiles M."/>
            <person name="Madan Babu M."/>
            <person name="Saito T."/>
            <person name="Buchrieser C."/>
            <person name="Wardroper A."/>
            <person name="Felder M."/>
            <person name="Thangavelu M."/>
            <person name="Johnson D."/>
            <person name="Knights A."/>
            <person name="Loulseged H."/>
            <person name="Mungall K.L."/>
            <person name="Oliver K."/>
            <person name="Price C."/>
            <person name="Quail M.A."/>
            <person name="Urushihara H."/>
            <person name="Hernandez J."/>
            <person name="Rabbinowitsch E."/>
            <person name="Steffen D."/>
            <person name="Sanders M."/>
            <person name="Ma J."/>
            <person name="Kohara Y."/>
            <person name="Sharp S."/>
            <person name="Simmonds M.N."/>
            <person name="Spiegler S."/>
            <person name="Tivey A."/>
            <person name="Sugano S."/>
            <person name="White B."/>
            <person name="Walker D."/>
            <person name="Woodward J.R."/>
            <person name="Winckler T."/>
            <person name="Tanaka Y."/>
            <person name="Shaulsky G."/>
            <person name="Schleicher M."/>
            <person name="Weinstock G.M."/>
            <person name="Rosenthal A."/>
            <person name="Cox E.C."/>
            <person name="Chisholm R.L."/>
            <person name="Gibbs R.A."/>
            <person name="Loomis W.F."/>
            <person name="Platzer M."/>
            <person name="Kay R.R."/>
            <person name="Williams J.G."/>
            <person name="Dear P.H."/>
            <person name="Noegel A.A."/>
            <person name="Barrell B.G."/>
            <person name="Kuspa A."/>
        </authorList>
    </citation>
    <scope>NUCLEOTIDE SEQUENCE [LARGE SCALE GENOMIC DNA]</scope>
    <source>
        <strain>AX4</strain>
    </source>
</reference>
<reference key="2">
    <citation type="journal article" date="2007" name="Bioinformatics">
        <title>Polyketide synthase genes and the natural products potential of Dictyostelium discoideum.</title>
        <authorList>
            <person name="Zucko J."/>
            <person name="Skunca N."/>
            <person name="Curk T."/>
            <person name="Zupan B."/>
            <person name="Long P.F."/>
            <person name="Cullum J."/>
            <person name="Kessin R.H."/>
            <person name="Hranueli D."/>
        </authorList>
    </citation>
    <scope>IDENTIFICATION</scope>
</reference>
<accession>Q54FD2</accession>
<organism>
    <name type="scientific">Dictyostelium discoideum</name>
    <name type="common">Social amoeba</name>
    <dbReference type="NCBI Taxonomy" id="44689"/>
    <lineage>
        <taxon>Eukaryota</taxon>
        <taxon>Amoebozoa</taxon>
        <taxon>Evosea</taxon>
        <taxon>Eumycetozoa</taxon>
        <taxon>Dictyostelia</taxon>
        <taxon>Dictyosteliales</taxon>
        <taxon>Dictyosteliaceae</taxon>
        <taxon>Dictyostelium</taxon>
    </lineage>
</organism>